<dbReference type="EC" id="6.1.1.14" evidence="1"/>
<dbReference type="EMBL" id="CP001037">
    <property type="protein sequence ID" value="ACC80322.1"/>
    <property type="molecule type" value="Genomic_DNA"/>
</dbReference>
<dbReference type="RefSeq" id="WP_012408340.1">
    <property type="nucleotide sequence ID" value="NC_010628.1"/>
</dbReference>
<dbReference type="SMR" id="B2J0V5"/>
<dbReference type="STRING" id="63737.Npun_R1642"/>
<dbReference type="EnsemblBacteria" id="ACC80322">
    <property type="protein sequence ID" value="ACC80322"/>
    <property type="gene ID" value="Npun_R1642"/>
</dbReference>
<dbReference type="KEGG" id="npu:Npun_R1642"/>
<dbReference type="eggNOG" id="COG0752">
    <property type="taxonomic scope" value="Bacteria"/>
</dbReference>
<dbReference type="HOGENOM" id="CLU_057066_1_0_3"/>
<dbReference type="OrthoDB" id="9802183at2"/>
<dbReference type="PhylomeDB" id="B2J0V5"/>
<dbReference type="Proteomes" id="UP000001191">
    <property type="component" value="Chromosome"/>
</dbReference>
<dbReference type="GO" id="GO:0005829">
    <property type="term" value="C:cytosol"/>
    <property type="evidence" value="ECO:0007669"/>
    <property type="project" value="TreeGrafter"/>
</dbReference>
<dbReference type="GO" id="GO:0005524">
    <property type="term" value="F:ATP binding"/>
    <property type="evidence" value="ECO:0007669"/>
    <property type="project" value="UniProtKB-UniRule"/>
</dbReference>
<dbReference type="GO" id="GO:0004820">
    <property type="term" value="F:glycine-tRNA ligase activity"/>
    <property type="evidence" value="ECO:0007669"/>
    <property type="project" value="UniProtKB-UniRule"/>
</dbReference>
<dbReference type="GO" id="GO:0006426">
    <property type="term" value="P:glycyl-tRNA aminoacylation"/>
    <property type="evidence" value="ECO:0007669"/>
    <property type="project" value="UniProtKB-UniRule"/>
</dbReference>
<dbReference type="CDD" id="cd00733">
    <property type="entry name" value="GlyRS_alpha_core"/>
    <property type="match status" value="1"/>
</dbReference>
<dbReference type="FunFam" id="3.30.930.10:FF:000006">
    <property type="entry name" value="Glycine--tRNA ligase alpha subunit"/>
    <property type="match status" value="1"/>
</dbReference>
<dbReference type="Gene3D" id="3.30.930.10">
    <property type="entry name" value="Bira Bifunctional Protein, Domain 2"/>
    <property type="match status" value="1"/>
</dbReference>
<dbReference type="Gene3D" id="1.20.58.180">
    <property type="entry name" value="Class II aaRS and biotin synthetases, domain 2"/>
    <property type="match status" value="1"/>
</dbReference>
<dbReference type="HAMAP" id="MF_00254">
    <property type="entry name" value="Gly_tRNA_synth_alpha"/>
    <property type="match status" value="1"/>
</dbReference>
<dbReference type="InterPro" id="IPR045864">
    <property type="entry name" value="aa-tRNA-synth_II/BPL/LPL"/>
</dbReference>
<dbReference type="InterPro" id="IPR006194">
    <property type="entry name" value="Gly-tRNA-synth_heterodimer"/>
</dbReference>
<dbReference type="InterPro" id="IPR002310">
    <property type="entry name" value="Gly-tRNA_ligase_asu"/>
</dbReference>
<dbReference type="NCBIfam" id="TIGR00388">
    <property type="entry name" value="glyQ"/>
    <property type="match status" value="1"/>
</dbReference>
<dbReference type="NCBIfam" id="NF006827">
    <property type="entry name" value="PRK09348.1"/>
    <property type="match status" value="1"/>
</dbReference>
<dbReference type="PANTHER" id="PTHR30075:SF2">
    <property type="entry name" value="GLYCINE--TRNA LIGASE, CHLOROPLASTIC_MITOCHONDRIAL 2"/>
    <property type="match status" value="1"/>
</dbReference>
<dbReference type="PANTHER" id="PTHR30075">
    <property type="entry name" value="GLYCYL-TRNA SYNTHETASE"/>
    <property type="match status" value="1"/>
</dbReference>
<dbReference type="Pfam" id="PF02091">
    <property type="entry name" value="tRNA-synt_2e"/>
    <property type="match status" value="1"/>
</dbReference>
<dbReference type="PRINTS" id="PR01044">
    <property type="entry name" value="TRNASYNTHGA"/>
</dbReference>
<dbReference type="SUPFAM" id="SSF55681">
    <property type="entry name" value="Class II aaRS and biotin synthetases"/>
    <property type="match status" value="1"/>
</dbReference>
<dbReference type="PROSITE" id="PS50861">
    <property type="entry name" value="AA_TRNA_LIGASE_II_GLYAB"/>
    <property type="match status" value="1"/>
</dbReference>
<evidence type="ECO:0000255" key="1">
    <source>
        <dbReference type="HAMAP-Rule" id="MF_00254"/>
    </source>
</evidence>
<protein>
    <recommendedName>
        <fullName evidence="1">Glycine--tRNA ligase alpha subunit</fullName>
        <ecNumber evidence="1">6.1.1.14</ecNumber>
    </recommendedName>
    <alternativeName>
        <fullName evidence="1">Glycyl-tRNA synthetase alpha subunit</fullName>
        <shortName evidence="1">GlyRS</shortName>
    </alternativeName>
</protein>
<organism>
    <name type="scientific">Nostoc punctiforme (strain ATCC 29133 / PCC 73102)</name>
    <dbReference type="NCBI Taxonomy" id="63737"/>
    <lineage>
        <taxon>Bacteria</taxon>
        <taxon>Bacillati</taxon>
        <taxon>Cyanobacteriota</taxon>
        <taxon>Cyanophyceae</taxon>
        <taxon>Nostocales</taxon>
        <taxon>Nostocaceae</taxon>
        <taxon>Nostoc</taxon>
    </lineage>
</organism>
<sequence>MNFQSVISLLHHFWGTRGCLIAQPYDIEKGAGTKNPQTFLRALGPEPWAVAYVEPCRRPTDGRYGENPNRFQHYYQYQVLIKPSPDNIQEIYLDSLRALGIRPEDHDIRFVEDNWEDATVGAWGTGWEVWLDGMEITQFTYFQQCGGIDCRPVSIEITYGLERLTMYLQQVEAITKIHWTDNITYGDVFLQNEIEQSTYNFEASNPELLLTLFSLYEQEATQLTKKGLVLPSLDYVMKCSHTFNLLDARGVISVTERTRYIARIRHLARKVAHLYVEQREKLGFPLLKDLKPAIPVGQVEVAATQTKSASAG</sequence>
<keyword id="KW-0030">Aminoacyl-tRNA synthetase</keyword>
<keyword id="KW-0067">ATP-binding</keyword>
<keyword id="KW-0963">Cytoplasm</keyword>
<keyword id="KW-0436">Ligase</keyword>
<keyword id="KW-0547">Nucleotide-binding</keyword>
<keyword id="KW-0648">Protein biosynthesis</keyword>
<keyword id="KW-1185">Reference proteome</keyword>
<gene>
    <name evidence="1" type="primary">glyQ</name>
    <name type="ordered locus">Npun_R1642</name>
</gene>
<feature type="chain" id="PRO_1000101210" description="Glycine--tRNA ligase alpha subunit">
    <location>
        <begin position="1"/>
        <end position="312"/>
    </location>
</feature>
<comment type="catalytic activity">
    <reaction evidence="1">
        <text>tRNA(Gly) + glycine + ATP = glycyl-tRNA(Gly) + AMP + diphosphate</text>
        <dbReference type="Rhea" id="RHEA:16013"/>
        <dbReference type="Rhea" id="RHEA-COMP:9664"/>
        <dbReference type="Rhea" id="RHEA-COMP:9683"/>
        <dbReference type="ChEBI" id="CHEBI:30616"/>
        <dbReference type="ChEBI" id="CHEBI:33019"/>
        <dbReference type="ChEBI" id="CHEBI:57305"/>
        <dbReference type="ChEBI" id="CHEBI:78442"/>
        <dbReference type="ChEBI" id="CHEBI:78522"/>
        <dbReference type="ChEBI" id="CHEBI:456215"/>
        <dbReference type="EC" id="6.1.1.14"/>
    </reaction>
</comment>
<comment type="subunit">
    <text evidence="1">Tetramer of two alpha and two beta subunits.</text>
</comment>
<comment type="subcellular location">
    <subcellularLocation>
        <location evidence="1">Cytoplasm</location>
    </subcellularLocation>
</comment>
<comment type="similarity">
    <text evidence="1">Belongs to the class-II aminoacyl-tRNA synthetase family.</text>
</comment>
<proteinExistence type="inferred from homology"/>
<accession>B2J0V5</accession>
<reference key="1">
    <citation type="journal article" date="2013" name="Plant Physiol.">
        <title>A Nostoc punctiforme Sugar Transporter Necessary to Establish a Cyanobacterium-Plant Symbiosis.</title>
        <authorList>
            <person name="Ekman M."/>
            <person name="Picossi S."/>
            <person name="Campbell E.L."/>
            <person name="Meeks J.C."/>
            <person name="Flores E."/>
        </authorList>
    </citation>
    <scope>NUCLEOTIDE SEQUENCE [LARGE SCALE GENOMIC DNA]</scope>
    <source>
        <strain>ATCC 29133 / PCC 73102</strain>
    </source>
</reference>
<name>SYGA_NOSP7</name>